<dbReference type="EC" id="2.1.1.359" evidence="2"/>
<dbReference type="EMBL" id="CR380949">
    <property type="protein sequence ID" value="CAG58098.1"/>
    <property type="molecule type" value="Genomic_DNA"/>
</dbReference>
<dbReference type="RefSeq" id="XP_445194.1">
    <property type="nucleotide sequence ID" value="XM_445194.1"/>
</dbReference>
<dbReference type="SMR" id="Q6FX50"/>
<dbReference type="FunCoup" id="Q6FX50">
    <property type="interactions" value="154"/>
</dbReference>
<dbReference type="STRING" id="284593.Q6FX50"/>
<dbReference type="EnsemblFungi" id="CAGL0C00297g-T">
    <property type="protein sequence ID" value="CAGL0C00297g-T-p1"/>
    <property type="gene ID" value="CAGL0C00297g"/>
</dbReference>
<dbReference type="KEGG" id="cgr:2886766"/>
<dbReference type="CGD" id="CAL0127454">
    <property type="gene designation" value="SET2"/>
</dbReference>
<dbReference type="VEuPathDB" id="FungiDB:CAGL0C00297g"/>
<dbReference type="eggNOG" id="KOG4442">
    <property type="taxonomic scope" value="Eukaryota"/>
</dbReference>
<dbReference type="HOGENOM" id="CLU_008492_1_1_1"/>
<dbReference type="InParanoid" id="Q6FX50"/>
<dbReference type="OMA" id="AQSQPCY"/>
<dbReference type="Proteomes" id="UP000002428">
    <property type="component" value="Chromosome C"/>
</dbReference>
<dbReference type="GO" id="GO:0005694">
    <property type="term" value="C:chromosome"/>
    <property type="evidence" value="ECO:0007669"/>
    <property type="project" value="UniProtKB-SubCell"/>
</dbReference>
<dbReference type="GO" id="GO:0005829">
    <property type="term" value="C:cytosol"/>
    <property type="evidence" value="ECO:0007669"/>
    <property type="project" value="EnsemblFungi"/>
</dbReference>
<dbReference type="GO" id="GO:0005634">
    <property type="term" value="C:nucleus"/>
    <property type="evidence" value="ECO:0007669"/>
    <property type="project" value="UniProtKB-SubCell"/>
</dbReference>
<dbReference type="GO" id="GO:0140955">
    <property type="term" value="F:histone H3K36 trimethyltransferase activity"/>
    <property type="evidence" value="ECO:0007669"/>
    <property type="project" value="UniProtKB-EC"/>
</dbReference>
<dbReference type="GO" id="GO:0008168">
    <property type="term" value="F:methyltransferase activity"/>
    <property type="evidence" value="ECO:0000314"/>
    <property type="project" value="CGD"/>
</dbReference>
<dbReference type="GO" id="GO:0003723">
    <property type="term" value="F:RNA binding"/>
    <property type="evidence" value="ECO:0007669"/>
    <property type="project" value="EnsemblFungi"/>
</dbReference>
<dbReference type="GO" id="GO:0030437">
    <property type="term" value="P:ascospore formation"/>
    <property type="evidence" value="ECO:0007669"/>
    <property type="project" value="EnsemblFungi"/>
</dbReference>
<dbReference type="GO" id="GO:0071466">
    <property type="term" value="P:cellular response to xenobiotic stimulus"/>
    <property type="evidence" value="ECO:0000315"/>
    <property type="project" value="CGD"/>
</dbReference>
<dbReference type="GO" id="GO:0006354">
    <property type="term" value="P:DNA-templated transcription elongation"/>
    <property type="evidence" value="ECO:0007669"/>
    <property type="project" value="EnsemblFungi"/>
</dbReference>
<dbReference type="GO" id="GO:0006353">
    <property type="term" value="P:DNA-templated transcription termination"/>
    <property type="evidence" value="ECO:0007669"/>
    <property type="project" value="EnsemblFungi"/>
</dbReference>
<dbReference type="GO" id="GO:0032259">
    <property type="term" value="P:methylation"/>
    <property type="evidence" value="ECO:0007669"/>
    <property type="project" value="UniProtKB-KW"/>
</dbReference>
<dbReference type="GO" id="GO:0060195">
    <property type="term" value="P:negative regulation of antisense RNA transcription"/>
    <property type="evidence" value="ECO:0007669"/>
    <property type="project" value="EnsemblFungi"/>
</dbReference>
<dbReference type="GO" id="GO:0045128">
    <property type="term" value="P:negative regulation of reciprocal meiotic recombination"/>
    <property type="evidence" value="ECO:0007669"/>
    <property type="project" value="EnsemblFungi"/>
</dbReference>
<dbReference type="GO" id="GO:0030174">
    <property type="term" value="P:regulation of DNA-templated DNA replication initiation"/>
    <property type="evidence" value="ECO:0007669"/>
    <property type="project" value="EnsemblFungi"/>
</dbReference>
<dbReference type="GO" id="GO:0009302">
    <property type="term" value="P:sno(s)RNA transcription"/>
    <property type="evidence" value="ECO:0007669"/>
    <property type="project" value="EnsemblFungi"/>
</dbReference>
<dbReference type="GO" id="GO:0006283">
    <property type="term" value="P:transcription-coupled nucleotide-excision repair"/>
    <property type="evidence" value="ECO:0007669"/>
    <property type="project" value="EnsemblFungi"/>
</dbReference>
<dbReference type="CDD" id="cd19172">
    <property type="entry name" value="SET_SETD2"/>
    <property type="match status" value="1"/>
</dbReference>
<dbReference type="FunFam" id="2.170.270.10:FF:000033">
    <property type="entry name" value="Histone-lysine N-methyltransferase"/>
    <property type="match status" value="1"/>
</dbReference>
<dbReference type="Gene3D" id="2.170.270.10">
    <property type="entry name" value="SET domain"/>
    <property type="match status" value="1"/>
</dbReference>
<dbReference type="Gene3D" id="1.10.1740.100">
    <property type="entry name" value="Set2, Rpb1 interacting domain"/>
    <property type="match status" value="1"/>
</dbReference>
<dbReference type="InterPro" id="IPR006560">
    <property type="entry name" value="AWS_dom"/>
</dbReference>
<dbReference type="InterPro" id="IPR003616">
    <property type="entry name" value="Post-SET_dom"/>
</dbReference>
<dbReference type="InterPro" id="IPR025788">
    <property type="entry name" value="Set2_fungi"/>
</dbReference>
<dbReference type="InterPro" id="IPR050777">
    <property type="entry name" value="SET2_Histone-Lys_MeTrsfase"/>
</dbReference>
<dbReference type="InterPro" id="IPR001214">
    <property type="entry name" value="SET_dom"/>
</dbReference>
<dbReference type="InterPro" id="IPR046341">
    <property type="entry name" value="SET_dom_sf"/>
</dbReference>
<dbReference type="InterPro" id="IPR044437">
    <property type="entry name" value="SETD2/Set2_SET"/>
</dbReference>
<dbReference type="InterPro" id="IPR013257">
    <property type="entry name" value="SRI"/>
</dbReference>
<dbReference type="InterPro" id="IPR038190">
    <property type="entry name" value="SRI_sf"/>
</dbReference>
<dbReference type="InterPro" id="IPR001202">
    <property type="entry name" value="WW_dom"/>
</dbReference>
<dbReference type="InterPro" id="IPR036020">
    <property type="entry name" value="WW_dom_sf"/>
</dbReference>
<dbReference type="PANTHER" id="PTHR22884">
    <property type="entry name" value="SET DOMAIN PROTEINS"/>
    <property type="match status" value="1"/>
</dbReference>
<dbReference type="Pfam" id="PF17907">
    <property type="entry name" value="AWS"/>
    <property type="match status" value="1"/>
</dbReference>
<dbReference type="Pfam" id="PF00856">
    <property type="entry name" value="SET"/>
    <property type="match status" value="1"/>
</dbReference>
<dbReference type="Pfam" id="PF08236">
    <property type="entry name" value="SRI"/>
    <property type="match status" value="1"/>
</dbReference>
<dbReference type="Pfam" id="PF18507">
    <property type="entry name" value="WW_1"/>
    <property type="match status" value="1"/>
</dbReference>
<dbReference type="SMART" id="SM00570">
    <property type="entry name" value="AWS"/>
    <property type="match status" value="1"/>
</dbReference>
<dbReference type="SMART" id="SM00508">
    <property type="entry name" value="PostSET"/>
    <property type="match status" value="1"/>
</dbReference>
<dbReference type="SMART" id="SM00317">
    <property type="entry name" value="SET"/>
    <property type="match status" value="1"/>
</dbReference>
<dbReference type="SUPFAM" id="SSF82199">
    <property type="entry name" value="SET domain"/>
    <property type="match status" value="1"/>
</dbReference>
<dbReference type="SUPFAM" id="SSF51045">
    <property type="entry name" value="WW domain"/>
    <property type="match status" value="1"/>
</dbReference>
<dbReference type="PROSITE" id="PS51215">
    <property type="entry name" value="AWS"/>
    <property type="match status" value="1"/>
</dbReference>
<dbReference type="PROSITE" id="PS50868">
    <property type="entry name" value="POST_SET"/>
    <property type="match status" value="1"/>
</dbReference>
<dbReference type="PROSITE" id="PS51568">
    <property type="entry name" value="SAM_MT43_SET2_1"/>
    <property type="match status" value="1"/>
</dbReference>
<dbReference type="PROSITE" id="PS50280">
    <property type="entry name" value="SET"/>
    <property type="match status" value="1"/>
</dbReference>
<dbReference type="PROSITE" id="PS50020">
    <property type="entry name" value="WW_DOMAIN_2"/>
    <property type="match status" value="1"/>
</dbReference>
<proteinExistence type="inferred from homology"/>
<gene>
    <name type="primary">SET2</name>
    <name type="ordered locus">CAGL0C00297g</name>
</gene>
<protein>
    <recommendedName>
        <fullName>Histone-lysine N-methyltransferase, H3 lysine-36 specific</fullName>
        <ecNumber evidence="2">2.1.1.359</ecNumber>
    </recommendedName>
    <alternativeName>
        <fullName>SET domain-containing protein 2</fullName>
    </alternativeName>
</protein>
<name>SET2_CANGA</name>
<sequence length="716" mass="83261">MSDISLAESIELNSSVPKDDQVFDDEIPDAEVQSEPSEEPPKLKRRLYLEEEDKTDEALSTFVNLEDCLYSNKHVGNCNSNDFMECDCYEDFQNGKNHACGEDSDCINRLTLIECVNDLCGTCGNDCANQRFQKKEYANIAVFKTKMKGYGVRAESDIEINDFIYEYKGEVIEEEEFRDRLVDYDQKKFRHFYFMMLQSGEFIDATIKGSLARFCNHSCNPNAYVNKWVVAGKLRMGIFAKRKILKGEEITFDYNVDRYGAAAQKCYCEEPNCIGFLGGKTQTDAASLLPQNVAEALGVKASEEKKWIKLKKAEGQKIEKSEAENINIEFLESITINPCNTATDVQKVMSVLLQIENKTVAQKLLQRLYLSSNEELLHHVIKLHGYTCFTKLLQLFALEEDELKKILYFLERLPKTTKNGIISSHIDFQVKSVCKNHSSLSSIGDSLIEKWKAYEEYKRITKLDINNSTKTKLQDIRRIKLPPGWEIVFENGRPMYYNAEKKTKLLYPPTGASKTFASQKSSSPIPKFKNKRDQNNGIKRKLTDEEYEERKRKRIELEQENIKKAKEEELQRLKAKFNQEREQKQILENIIAEANRKKEEERQNQLKIEKEKKDKKESKKQLSQISKMEHKWTKFFASVVPNILKKYESDKKIDHDNMKQCARDIVKILAAKEMKKDSSKEPEATVSKEKRHKIKQFVHGYMEKFLEKLDKKKQRH</sequence>
<organism>
    <name type="scientific">Candida glabrata (strain ATCC 2001 / BCRC 20586 / JCM 3761 / NBRC 0622 / NRRL Y-65 / CBS 138)</name>
    <name type="common">Yeast</name>
    <name type="synonym">Nakaseomyces glabratus</name>
    <dbReference type="NCBI Taxonomy" id="284593"/>
    <lineage>
        <taxon>Eukaryota</taxon>
        <taxon>Fungi</taxon>
        <taxon>Dikarya</taxon>
        <taxon>Ascomycota</taxon>
        <taxon>Saccharomycotina</taxon>
        <taxon>Saccharomycetes</taxon>
        <taxon>Saccharomycetales</taxon>
        <taxon>Saccharomycetaceae</taxon>
        <taxon>Nakaseomyces</taxon>
    </lineage>
</organism>
<keyword id="KW-0158">Chromosome</keyword>
<keyword id="KW-0175">Coiled coil</keyword>
<keyword id="KW-0489">Methyltransferase</keyword>
<keyword id="KW-0539">Nucleus</keyword>
<keyword id="KW-1185">Reference proteome</keyword>
<keyword id="KW-0678">Repressor</keyword>
<keyword id="KW-0949">S-adenosyl-L-methionine</keyword>
<keyword id="KW-0804">Transcription</keyword>
<keyword id="KW-0805">Transcription regulation</keyword>
<keyword id="KW-0808">Transferase</keyword>
<feature type="chain" id="PRO_0000269783" description="Histone-lysine N-methyltransferase, H3 lysine-36 specific">
    <location>
        <begin position="1"/>
        <end position="716"/>
    </location>
</feature>
<feature type="domain" description="AWS" evidence="7">
    <location>
        <begin position="81"/>
        <end position="136"/>
    </location>
</feature>
<feature type="domain" description="SET" evidence="5">
    <location>
        <begin position="138"/>
        <end position="255"/>
    </location>
</feature>
<feature type="domain" description="Post-SET" evidence="4">
    <location>
        <begin position="262"/>
        <end position="278"/>
    </location>
</feature>
<feature type="domain" description="WW" evidence="6">
    <location>
        <begin position="479"/>
        <end position="511"/>
    </location>
</feature>
<feature type="region of interest" description="Disordered" evidence="9">
    <location>
        <begin position="1"/>
        <end position="42"/>
    </location>
</feature>
<feature type="region of interest" description="Disordered" evidence="9">
    <location>
        <begin position="515"/>
        <end position="545"/>
    </location>
</feature>
<feature type="region of interest" description="Disordered" evidence="9">
    <location>
        <begin position="597"/>
        <end position="623"/>
    </location>
</feature>
<feature type="coiled-coil region" evidence="3">
    <location>
        <begin position="539"/>
        <end position="628"/>
    </location>
</feature>
<feature type="compositionally biased region" description="Polar residues" evidence="9">
    <location>
        <begin position="515"/>
        <end position="524"/>
    </location>
</feature>
<feature type="compositionally biased region" description="Basic and acidic residues" evidence="9">
    <location>
        <begin position="597"/>
        <end position="620"/>
    </location>
</feature>
<accession>Q6FX50</accession>
<evidence type="ECO:0000250" key="1"/>
<evidence type="ECO:0000250" key="2">
    <source>
        <dbReference type="UniProtKB" id="P46995"/>
    </source>
</evidence>
<evidence type="ECO:0000255" key="3"/>
<evidence type="ECO:0000255" key="4">
    <source>
        <dbReference type="PROSITE-ProRule" id="PRU00155"/>
    </source>
</evidence>
<evidence type="ECO:0000255" key="5">
    <source>
        <dbReference type="PROSITE-ProRule" id="PRU00190"/>
    </source>
</evidence>
<evidence type="ECO:0000255" key="6">
    <source>
        <dbReference type="PROSITE-ProRule" id="PRU00224"/>
    </source>
</evidence>
<evidence type="ECO:0000255" key="7">
    <source>
        <dbReference type="PROSITE-ProRule" id="PRU00562"/>
    </source>
</evidence>
<evidence type="ECO:0000255" key="8">
    <source>
        <dbReference type="PROSITE-ProRule" id="PRU00901"/>
    </source>
</evidence>
<evidence type="ECO:0000256" key="9">
    <source>
        <dbReference type="SAM" id="MobiDB-lite"/>
    </source>
</evidence>
<comment type="function">
    <text evidence="2">Histone methyltransferase that trimethylates histone H3 'Lys-36' forming H3K36me3. Involved in transcription elongation as well as in transcription repression.</text>
</comment>
<comment type="catalytic activity">
    <reaction evidence="2 8">
        <text>L-lysyl(36)-[histone H3] + 3 S-adenosyl-L-methionine = N(6),N(6),N(6)-trimethyl-L-lysyl(36)-[histone H3] + 3 S-adenosyl-L-homocysteine + 3 H(+)</text>
        <dbReference type="Rhea" id="RHEA:60324"/>
        <dbReference type="Rhea" id="RHEA-COMP:9785"/>
        <dbReference type="Rhea" id="RHEA-COMP:15536"/>
        <dbReference type="ChEBI" id="CHEBI:15378"/>
        <dbReference type="ChEBI" id="CHEBI:29969"/>
        <dbReference type="ChEBI" id="CHEBI:57856"/>
        <dbReference type="ChEBI" id="CHEBI:59789"/>
        <dbReference type="ChEBI" id="CHEBI:61961"/>
        <dbReference type="EC" id="2.1.1.359"/>
    </reaction>
</comment>
<comment type="subcellular location">
    <subcellularLocation>
        <location evidence="1">Nucleus</location>
    </subcellularLocation>
    <subcellularLocation>
        <location evidence="1">Chromosome</location>
    </subcellularLocation>
</comment>
<comment type="domain">
    <text evidence="1">The AWS and SET domains are necessary for transcription repression.</text>
</comment>
<comment type="similarity">
    <text evidence="8">Belongs to the class V-like SAM-binding methyltransferase superfamily. Histone-lysine methyltransferase family. SET2 subfamily.</text>
</comment>
<reference key="1">
    <citation type="journal article" date="2004" name="Nature">
        <title>Genome evolution in yeasts.</title>
        <authorList>
            <person name="Dujon B."/>
            <person name="Sherman D."/>
            <person name="Fischer G."/>
            <person name="Durrens P."/>
            <person name="Casaregola S."/>
            <person name="Lafontaine I."/>
            <person name="de Montigny J."/>
            <person name="Marck C."/>
            <person name="Neuveglise C."/>
            <person name="Talla E."/>
            <person name="Goffard N."/>
            <person name="Frangeul L."/>
            <person name="Aigle M."/>
            <person name="Anthouard V."/>
            <person name="Babour A."/>
            <person name="Barbe V."/>
            <person name="Barnay S."/>
            <person name="Blanchin S."/>
            <person name="Beckerich J.-M."/>
            <person name="Beyne E."/>
            <person name="Bleykasten C."/>
            <person name="Boisrame A."/>
            <person name="Boyer J."/>
            <person name="Cattolico L."/>
            <person name="Confanioleri F."/>
            <person name="de Daruvar A."/>
            <person name="Despons L."/>
            <person name="Fabre E."/>
            <person name="Fairhead C."/>
            <person name="Ferry-Dumazet H."/>
            <person name="Groppi A."/>
            <person name="Hantraye F."/>
            <person name="Hennequin C."/>
            <person name="Jauniaux N."/>
            <person name="Joyet P."/>
            <person name="Kachouri R."/>
            <person name="Kerrest A."/>
            <person name="Koszul R."/>
            <person name="Lemaire M."/>
            <person name="Lesur I."/>
            <person name="Ma L."/>
            <person name="Muller H."/>
            <person name="Nicaud J.-M."/>
            <person name="Nikolski M."/>
            <person name="Oztas S."/>
            <person name="Ozier-Kalogeropoulos O."/>
            <person name="Pellenz S."/>
            <person name="Potier S."/>
            <person name="Richard G.-F."/>
            <person name="Straub M.-L."/>
            <person name="Suleau A."/>
            <person name="Swennen D."/>
            <person name="Tekaia F."/>
            <person name="Wesolowski-Louvel M."/>
            <person name="Westhof E."/>
            <person name="Wirth B."/>
            <person name="Zeniou-Meyer M."/>
            <person name="Zivanovic Y."/>
            <person name="Bolotin-Fukuhara M."/>
            <person name="Thierry A."/>
            <person name="Bouchier C."/>
            <person name="Caudron B."/>
            <person name="Scarpelli C."/>
            <person name="Gaillardin C."/>
            <person name="Weissenbach J."/>
            <person name="Wincker P."/>
            <person name="Souciet J.-L."/>
        </authorList>
    </citation>
    <scope>NUCLEOTIDE SEQUENCE [LARGE SCALE GENOMIC DNA]</scope>
    <source>
        <strain>ATCC 2001 / BCRC 20586 / JCM 3761 / NBRC 0622 / NRRL Y-65 / CBS 138</strain>
    </source>
</reference>